<name>DTD_STRPQ</name>
<dbReference type="EC" id="3.1.1.96" evidence="1"/>
<dbReference type="EMBL" id="BA000034">
    <property type="protein sequence ID" value="BAC64796.1"/>
    <property type="molecule type" value="Genomic_DNA"/>
</dbReference>
<dbReference type="RefSeq" id="WP_010922691.1">
    <property type="nucleotide sequence ID" value="NC_004606.1"/>
</dbReference>
<dbReference type="SMR" id="P0DA81"/>
<dbReference type="KEGG" id="sps:SPs1701"/>
<dbReference type="HOGENOM" id="CLU_076901_1_0_9"/>
<dbReference type="GO" id="GO:0005737">
    <property type="term" value="C:cytoplasm"/>
    <property type="evidence" value="ECO:0007669"/>
    <property type="project" value="UniProtKB-SubCell"/>
</dbReference>
<dbReference type="GO" id="GO:0051500">
    <property type="term" value="F:D-tyrosyl-tRNA(Tyr) deacylase activity"/>
    <property type="evidence" value="ECO:0007669"/>
    <property type="project" value="TreeGrafter"/>
</dbReference>
<dbReference type="GO" id="GO:0106026">
    <property type="term" value="F:Gly-tRNA(Ala) deacylase activity"/>
    <property type="evidence" value="ECO:0007669"/>
    <property type="project" value="UniProtKB-UniRule"/>
</dbReference>
<dbReference type="GO" id="GO:0043908">
    <property type="term" value="F:Ser(Gly)-tRNA(Ala) hydrolase activity"/>
    <property type="evidence" value="ECO:0007669"/>
    <property type="project" value="UniProtKB-UniRule"/>
</dbReference>
<dbReference type="GO" id="GO:0000049">
    <property type="term" value="F:tRNA binding"/>
    <property type="evidence" value="ECO:0007669"/>
    <property type="project" value="UniProtKB-UniRule"/>
</dbReference>
<dbReference type="GO" id="GO:0019478">
    <property type="term" value="P:D-amino acid catabolic process"/>
    <property type="evidence" value="ECO:0007669"/>
    <property type="project" value="UniProtKB-UniRule"/>
</dbReference>
<dbReference type="CDD" id="cd00563">
    <property type="entry name" value="Dtyr_deacylase"/>
    <property type="match status" value="1"/>
</dbReference>
<dbReference type="FunFam" id="3.50.80.10:FF:000001">
    <property type="entry name" value="D-aminoacyl-tRNA deacylase"/>
    <property type="match status" value="1"/>
</dbReference>
<dbReference type="Gene3D" id="3.50.80.10">
    <property type="entry name" value="D-tyrosyl-tRNA(Tyr) deacylase"/>
    <property type="match status" value="1"/>
</dbReference>
<dbReference type="HAMAP" id="MF_00518">
    <property type="entry name" value="Deacylase_Dtd"/>
    <property type="match status" value="1"/>
</dbReference>
<dbReference type="InterPro" id="IPR003732">
    <property type="entry name" value="Daa-tRNA_deacyls_DTD"/>
</dbReference>
<dbReference type="InterPro" id="IPR023509">
    <property type="entry name" value="DTD-like_sf"/>
</dbReference>
<dbReference type="NCBIfam" id="TIGR00256">
    <property type="entry name" value="D-aminoacyl-tRNA deacylase"/>
    <property type="match status" value="1"/>
</dbReference>
<dbReference type="PANTHER" id="PTHR10472:SF5">
    <property type="entry name" value="D-AMINOACYL-TRNA DEACYLASE 1"/>
    <property type="match status" value="1"/>
</dbReference>
<dbReference type="PANTHER" id="PTHR10472">
    <property type="entry name" value="D-TYROSYL-TRNA TYR DEACYLASE"/>
    <property type="match status" value="1"/>
</dbReference>
<dbReference type="Pfam" id="PF02580">
    <property type="entry name" value="Tyr_Deacylase"/>
    <property type="match status" value="1"/>
</dbReference>
<dbReference type="SUPFAM" id="SSF69500">
    <property type="entry name" value="DTD-like"/>
    <property type="match status" value="1"/>
</dbReference>
<organism>
    <name type="scientific">Streptococcus pyogenes serotype M3 (strain SSI-1)</name>
    <dbReference type="NCBI Taxonomy" id="193567"/>
    <lineage>
        <taxon>Bacteria</taxon>
        <taxon>Bacillati</taxon>
        <taxon>Bacillota</taxon>
        <taxon>Bacilli</taxon>
        <taxon>Lactobacillales</taxon>
        <taxon>Streptococcaceae</taxon>
        <taxon>Streptococcus</taxon>
    </lineage>
</organism>
<protein>
    <recommendedName>
        <fullName evidence="1">D-aminoacyl-tRNA deacylase</fullName>
        <shortName evidence="1">DTD</shortName>
        <ecNumber evidence="1">3.1.1.96</ecNumber>
    </recommendedName>
    <alternativeName>
        <fullName evidence="1">Gly-tRNA(Ala) deacylase</fullName>
    </alternativeName>
</protein>
<gene>
    <name evidence="1" type="primary">dtd</name>
    <name type="ordered locus">SPs1701</name>
</gene>
<keyword id="KW-0963">Cytoplasm</keyword>
<keyword id="KW-0378">Hydrolase</keyword>
<keyword id="KW-0694">RNA-binding</keyword>
<keyword id="KW-0820">tRNA-binding</keyword>
<proteinExistence type="inferred from homology"/>
<accession>P0DA81</accession>
<accession>P64000</accession>
<accession>Q99XX4</accession>
<reference key="1">
    <citation type="journal article" date="2003" name="Genome Res.">
        <title>Genome sequence of an M3 strain of Streptococcus pyogenes reveals a large-scale genomic rearrangement in invasive strains and new insights into phage evolution.</title>
        <authorList>
            <person name="Nakagawa I."/>
            <person name="Kurokawa K."/>
            <person name="Yamashita A."/>
            <person name="Nakata M."/>
            <person name="Tomiyasu Y."/>
            <person name="Okahashi N."/>
            <person name="Kawabata S."/>
            <person name="Yamazaki K."/>
            <person name="Shiba T."/>
            <person name="Yasunaga T."/>
            <person name="Hayashi H."/>
            <person name="Hattori M."/>
            <person name="Hamada S."/>
        </authorList>
    </citation>
    <scope>NUCLEOTIDE SEQUENCE [LARGE SCALE GENOMIC DNA]</scope>
    <source>
        <strain>SSI-1</strain>
    </source>
</reference>
<comment type="function">
    <text evidence="1">An aminoacyl-tRNA editing enzyme that deacylates mischarged D-aminoacyl-tRNAs. Also deacylates mischarged glycyl-tRNA(Ala), protecting cells against glycine mischarging by AlaRS. Acts via tRNA-based rather than protein-based catalysis; rejects L-amino acids rather than detecting D-amino acids in the active site. By recycling D-aminoacyl-tRNA to D-amino acids and free tRNA molecules, this enzyme counteracts the toxicity associated with the formation of D-aminoacyl-tRNA entities in vivo and helps enforce protein L-homochirality.</text>
</comment>
<comment type="catalytic activity">
    <reaction evidence="1">
        <text>glycyl-tRNA(Ala) + H2O = tRNA(Ala) + glycine + H(+)</text>
        <dbReference type="Rhea" id="RHEA:53744"/>
        <dbReference type="Rhea" id="RHEA-COMP:9657"/>
        <dbReference type="Rhea" id="RHEA-COMP:13640"/>
        <dbReference type="ChEBI" id="CHEBI:15377"/>
        <dbReference type="ChEBI" id="CHEBI:15378"/>
        <dbReference type="ChEBI" id="CHEBI:57305"/>
        <dbReference type="ChEBI" id="CHEBI:78442"/>
        <dbReference type="ChEBI" id="CHEBI:78522"/>
        <dbReference type="EC" id="3.1.1.96"/>
    </reaction>
</comment>
<comment type="catalytic activity">
    <reaction evidence="1">
        <text>a D-aminoacyl-tRNA + H2O = a tRNA + a D-alpha-amino acid + H(+)</text>
        <dbReference type="Rhea" id="RHEA:13953"/>
        <dbReference type="Rhea" id="RHEA-COMP:10123"/>
        <dbReference type="Rhea" id="RHEA-COMP:10124"/>
        <dbReference type="ChEBI" id="CHEBI:15377"/>
        <dbReference type="ChEBI" id="CHEBI:15378"/>
        <dbReference type="ChEBI" id="CHEBI:59871"/>
        <dbReference type="ChEBI" id="CHEBI:78442"/>
        <dbReference type="ChEBI" id="CHEBI:79333"/>
        <dbReference type="EC" id="3.1.1.96"/>
    </reaction>
</comment>
<comment type="subunit">
    <text evidence="1">Homodimer.</text>
</comment>
<comment type="subcellular location">
    <subcellularLocation>
        <location evidence="1">Cytoplasm</location>
    </subcellularLocation>
</comment>
<comment type="domain">
    <text evidence="1">A Gly-cisPro motif from one monomer fits into the active site of the other monomer to allow specific chiral rejection of L-amino acids.</text>
</comment>
<comment type="similarity">
    <text evidence="1">Belongs to the DTD family.</text>
</comment>
<evidence type="ECO:0000255" key="1">
    <source>
        <dbReference type="HAMAP-Rule" id="MF_00518"/>
    </source>
</evidence>
<feature type="chain" id="PRO_0000411328" description="D-aminoacyl-tRNA deacylase">
    <location>
        <begin position="1"/>
        <end position="147"/>
    </location>
</feature>
<feature type="short sequence motif" description="Gly-cisPro motif, important for rejection of L-amino acids" evidence="1">
    <location>
        <begin position="136"/>
        <end position="137"/>
    </location>
</feature>
<sequence>MKLVLQRVKEASVSIDGKIAGAINQGLLLLVGVGPDDNAEDLAYAVRKIVNMRIFSDADGKMNQSIQDIKGSILSVSQFTLYADTKKGNRPAFTGAAKPDLASQLYDSFNEQLAEFVPVERGVFGADMQVSLINDGPVTIILDTKCH</sequence>